<protein>
    <recommendedName>
        <fullName>Tubulin beta chain</fullName>
    </recommendedName>
    <alternativeName>
        <fullName>Beta-tubulin</fullName>
    </alternativeName>
</protein>
<organism>
    <name type="scientific">Pneumocystis carinii</name>
    <dbReference type="NCBI Taxonomy" id="4754"/>
    <lineage>
        <taxon>Eukaryota</taxon>
        <taxon>Fungi</taxon>
        <taxon>Dikarya</taxon>
        <taxon>Ascomycota</taxon>
        <taxon>Taphrinomycotina</taxon>
        <taxon>Pneumocystomycetes</taxon>
        <taxon>Pneumocystaceae</taxon>
        <taxon>Pneumocystis</taxon>
    </lineage>
</organism>
<keyword id="KW-0963">Cytoplasm</keyword>
<keyword id="KW-0206">Cytoskeleton</keyword>
<keyword id="KW-0342">GTP-binding</keyword>
<keyword id="KW-0460">Magnesium</keyword>
<keyword id="KW-0479">Metal-binding</keyword>
<keyword id="KW-0493">Microtubule</keyword>
<keyword id="KW-0547">Nucleotide-binding</keyword>
<name>TBB_PNECA</name>
<sequence>MREIVHLQTGQCGNQIGASFWSTISGEHGLDSTGVYQGTSDLQLERMNVYFNEASGGKYVPRSILIDLEPGTMDAVRSGPFGNLFRPDNFVFGQSGAGNNWAKGHYTEGAELVDSVLDVVRREAEACDCLQGFQITHSLGGGTGAGMGTLLISKIREEYPDRMMATFSVVPSPKVSDTVVEPYNATLSVHQLVENSDETFCIDNEALYDICMRTLKLPDPGYGDLNHLVSAVMSGITTCLRFPGQLNSDLRKLAVNMVPFPRLHFFIVGFAPLTSKGSHSFRSLTVPELTQQMFDAKNMMAASDPRHGRYLTVAAIFRGRVSMKEVEDQMHSVQQKNSSYFVEWIPNNVQTALCSIPPRGLKMSSTFIGNSTSIQELFKRVGDQFSAMFRRKAFLHWYTGEGMDEMEFTEAESNMNDLVSEYQQYEIAGVDEEVELDDEIET</sequence>
<dbReference type="EMBL" id="X62113">
    <property type="protein sequence ID" value="CAA44023.1"/>
    <property type="molecule type" value="mRNA"/>
</dbReference>
<dbReference type="EMBL" id="L05466">
    <property type="protein sequence ID" value="AAA33786.1"/>
    <property type="molecule type" value="Genomic_DNA"/>
</dbReference>
<dbReference type="EMBL" id="M96932">
    <property type="protein sequence ID" value="AAA02566.1"/>
    <property type="molecule type" value="Unassigned_DNA"/>
</dbReference>
<dbReference type="PIR" id="S20908">
    <property type="entry name" value="S20908"/>
</dbReference>
<dbReference type="SMR" id="P24637"/>
<dbReference type="IntAct" id="P24637">
    <property type="interactions" value="1"/>
</dbReference>
<dbReference type="MINT" id="P24637"/>
<dbReference type="VEuPathDB" id="FungiDB:T552_02492"/>
<dbReference type="GO" id="GO:0005881">
    <property type="term" value="C:cytoplasmic microtubule"/>
    <property type="evidence" value="ECO:0007669"/>
    <property type="project" value="EnsemblFungi"/>
</dbReference>
<dbReference type="GO" id="GO:0005876">
    <property type="term" value="C:spindle microtubule"/>
    <property type="evidence" value="ECO:0007669"/>
    <property type="project" value="EnsemblFungi"/>
</dbReference>
<dbReference type="GO" id="GO:0005525">
    <property type="term" value="F:GTP binding"/>
    <property type="evidence" value="ECO:0007669"/>
    <property type="project" value="UniProtKB-KW"/>
</dbReference>
<dbReference type="GO" id="GO:0003924">
    <property type="term" value="F:GTPase activity"/>
    <property type="evidence" value="ECO:0007669"/>
    <property type="project" value="InterPro"/>
</dbReference>
<dbReference type="GO" id="GO:0046872">
    <property type="term" value="F:metal ion binding"/>
    <property type="evidence" value="ECO:0007669"/>
    <property type="project" value="UniProtKB-KW"/>
</dbReference>
<dbReference type="GO" id="GO:0005200">
    <property type="term" value="F:structural constituent of cytoskeleton"/>
    <property type="evidence" value="ECO:0007669"/>
    <property type="project" value="InterPro"/>
</dbReference>
<dbReference type="GO" id="GO:0031122">
    <property type="term" value="P:cytoplasmic microtubule organization"/>
    <property type="evidence" value="ECO:0007669"/>
    <property type="project" value="EnsemblFungi"/>
</dbReference>
<dbReference type="GO" id="GO:0048312">
    <property type="term" value="P:intracellular distribution of mitochondria"/>
    <property type="evidence" value="ECO:0007669"/>
    <property type="project" value="EnsemblFungi"/>
</dbReference>
<dbReference type="GO" id="GO:1903087">
    <property type="term" value="P:mitotic spindle pole body duplication"/>
    <property type="evidence" value="ECO:0007669"/>
    <property type="project" value="EnsemblFungi"/>
</dbReference>
<dbReference type="GO" id="GO:0098863">
    <property type="term" value="P:nuclear migration by microtubule mediated pushing forces"/>
    <property type="evidence" value="ECO:0007669"/>
    <property type="project" value="EnsemblFungi"/>
</dbReference>
<dbReference type="CDD" id="cd02187">
    <property type="entry name" value="beta_tubulin"/>
    <property type="match status" value="1"/>
</dbReference>
<dbReference type="FunFam" id="1.10.287.600:FF:000006">
    <property type="entry name" value="Tubulin beta chain"/>
    <property type="match status" value="1"/>
</dbReference>
<dbReference type="FunFam" id="3.30.1330.20:FF:000002">
    <property type="entry name" value="Tubulin beta chain"/>
    <property type="match status" value="1"/>
</dbReference>
<dbReference type="FunFam" id="3.40.50.1440:FF:000009">
    <property type="entry name" value="Tubulin beta chain"/>
    <property type="match status" value="1"/>
</dbReference>
<dbReference type="Gene3D" id="1.10.287.600">
    <property type="entry name" value="Helix hairpin bin"/>
    <property type="match status" value="1"/>
</dbReference>
<dbReference type="Gene3D" id="3.30.1330.20">
    <property type="entry name" value="Tubulin/FtsZ, C-terminal domain"/>
    <property type="match status" value="1"/>
</dbReference>
<dbReference type="Gene3D" id="3.40.50.1440">
    <property type="entry name" value="Tubulin/FtsZ, GTPase domain"/>
    <property type="match status" value="1"/>
</dbReference>
<dbReference type="InterPro" id="IPR013838">
    <property type="entry name" value="Beta-tubulin_BS"/>
</dbReference>
<dbReference type="InterPro" id="IPR002453">
    <property type="entry name" value="Beta_tubulin"/>
</dbReference>
<dbReference type="InterPro" id="IPR008280">
    <property type="entry name" value="Tub_FtsZ_C"/>
</dbReference>
<dbReference type="InterPro" id="IPR000217">
    <property type="entry name" value="Tubulin"/>
</dbReference>
<dbReference type="InterPro" id="IPR037103">
    <property type="entry name" value="Tubulin/FtsZ-like_C"/>
</dbReference>
<dbReference type="InterPro" id="IPR018316">
    <property type="entry name" value="Tubulin/FtsZ_2-layer-sand-dom"/>
</dbReference>
<dbReference type="InterPro" id="IPR036525">
    <property type="entry name" value="Tubulin/FtsZ_GTPase_sf"/>
</dbReference>
<dbReference type="InterPro" id="IPR023123">
    <property type="entry name" value="Tubulin_C"/>
</dbReference>
<dbReference type="InterPro" id="IPR017975">
    <property type="entry name" value="Tubulin_CS"/>
</dbReference>
<dbReference type="InterPro" id="IPR003008">
    <property type="entry name" value="Tubulin_FtsZ_GTPase"/>
</dbReference>
<dbReference type="PANTHER" id="PTHR11588">
    <property type="entry name" value="TUBULIN"/>
    <property type="match status" value="1"/>
</dbReference>
<dbReference type="Pfam" id="PF00091">
    <property type="entry name" value="Tubulin"/>
    <property type="match status" value="1"/>
</dbReference>
<dbReference type="Pfam" id="PF03953">
    <property type="entry name" value="Tubulin_C"/>
    <property type="match status" value="1"/>
</dbReference>
<dbReference type="PRINTS" id="PR01163">
    <property type="entry name" value="BETATUBULIN"/>
</dbReference>
<dbReference type="PRINTS" id="PR01161">
    <property type="entry name" value="TUBULIN"/>
</dbReference>
<dbReference type="SMART" id="SM00864">
    <property type="entry name" value="Tubulin"/>
    <property type="match status" value="1"/>
</dbReference>
<dbReference type="SMART" id="SM00865">
    <property type="entry name" value="Tubulin_C"/>
    <property type="match status" value="1"/>
</dbReference>
<dbReference type="SUPFAM" id="SSF55307">
    <property type="entry name" value="Tubulin C-terminal domain-like"/>
    <property type="match status" value="1"/>
</dbReference>
<dbReference type="SUPFAM" id="SSF52490">
    <property type="entry name" value="Tubulin nucleotide-binding domain-like"/>
    <property type="match status" value="1"/>
</dbReference>
<dbReference type="PROSITE" id="PS00227">
    <property type="entry name" value="TUBULIN"/>
    <property type="match status" value="1"/>
</dbReference>
<dbReference type="PROSITE" id="PS00228">
    <property type="entry name" value="TUBULIN_B_AUTOREG"/>
    <property type="match status" value="1"/>
</dbReference>
<comment type="function">
    <text>Tubulin is the major constituent of microtubules, a cylinder consisting of laterally associated linear protofilaments composed of alpha- and beta-tubulin heterodimers. Microtubules grow by the addition of GTP-tubulin dimers to the microtubule end, where a stabilizing cap forms. Below the cap, tubulin dimers are in GDP-bound state, owing to GTPase activity of alpha-tubulin.</text>
</comment>
<comment type="cofactor">
    <cofactor evidence="1">
        <name>Mg(2+)</name>
        <dbReference type="ChEBI" id="CHEBI:18420"/>
    </cofactor>
</comment>
<comment type="subunit">
    <text>Dimer of alpha and beta chains. A typical microtubule is a hollow water-filled tube with an outer diameter of 25 nm and an inner diameter of 15 nM. Alpha-beta heterodimers associate head-to-tail to form protofilaments running lengthwise along the microtubule wall with the beta-tubulin subunit facing the microtubule plus end conferring a structural polarity. Microtubules usually have 13 protofilaments but different protofilament numbers can be found in some organisms and specialized cells.</text>
</comment>
<comment type="subcellular location">
    <subcellularLocation>
        <location>Cytoplasm</location>
        <location>Cytoskeleton</location>
    </subcellularLocation>
</comment>
<comment type="similarity">
    <text evidence="3">Belongs to the tubulin family.</text>
</comment>
<feature type="chain" id="PRO_0000048427" description="Tubulin beta chain">
    <location>
        <begin position="1"/>
        <end position="442"/>
    </location>
</feature>
<feature type="binding site" evidence="2">
    <location>
        <position position="11"/>
    </location>
    <ligand>
        <name>GTP</name>
        <dbReference type="ChEBI" id="CHEBI:37565"/>
    </ligand>
</feature>
<feature type="binding site" evidence="1">
    <location>
        <position position="69"/>
    </location>
    <ligand>
        <name>GTP</name>
        <dbReference type="ChEBI" id="CHEBI:37565"/>
    </ligand>
</feature>
<feature type="binding site" evidence="1">
    <location>
        <position position="69"/>
    </location>
    <ligand>
        <name>Mg(2+)</name>
        <dbReference type="ChEBI" id="CHEBI:18420"/>
    </ligand>
</feature>
<feature type="binding site" evidence="2">
    <location>
        <position position="138"/>
    </location>
    <ligand>
        <name>GTP</name>
        <dbReference type="ChEBI" id="CHEBI:37565"/>
    </ligand>
</feature>
<feature type="binding site" evidence="2">
    <location>
        <position position="142"/>
    </location>
    <ligand>
        <name>GTP</name>
        <dbReference type="ChEBI" id="CHEBI:37565"/>
    </ligand>
</feature>
<feature type="binding site" evidence="2">
    <location>
        <position position="143"/>
    </location>
    <ligand>
        <name>GTP</name>
        <dbReference type="ChEBI" id="CHEBI:37565"/>
    </ligand>
</feature>
<feature type="binding site" evidence="2">
    <location>
        <position position="144"/>
    </location>
    <ligand>
        <name>GTP</name>
        <dbReference type="ChEBI" id="CHEBI:37565"/>
    </ligand>
</feature>
<feature type="binding site" evidence="2">
    <location>
        <position position="204"/>
    </location>
    <ligand>
        <name>GTP</name>
        <dbReference type="ChEBI" id="CHEBI:37565"/>
    </ligand>
</feature>
<feature type="binding site" evidence="2">
    <location>
        <position position="226"/>
    </location>
    <ligand>
        <name>GTP</name>
        <dbReference type="ChEBI" id="CHEBI:37565"/>
    </ligand>
</feature>
<reference key="1">
    <citation type="journal article" date="1992" name="Mol. Microbiol.">
        <title>Cloning and sequence of a beta-tubulin cDNA from Pneumocystis carinii: possible implications for drug therapy.</title>
        <authorList>
            <person name="Dyer M."/>
            <person name="Volpe F."/>
            <person name="Delves C.J."/>
            <person name="Somia N."/>
            <person name="Burns S."/>
            <person name="Scaife J.G."/>
        </authorList>
    </citation>
    <scope>NUCLEOTIDE SEQUENCE [MRNA]</scope>
</reference>
<reference key="2">
    <citation type="journal article" date="1992" name="Mol. Microbiol.">
        <title>The beta-tubulin gene from rat and human isolates of Pneumocystis carinii.</title>
        <authorList>
            <person name="Edlind T.D."/>
            <person name="Bartlett M.S."/>
            <person name="Weinberg G.A."/>
            <person name="Prah G.N."/>
            <person name="Smith J.W."/>
        </authorList>
    </citation>
    <scope>NUCLEOTIDE SEQUENCE</scope>
</reference>
<reference key="3">
    <citation type="journal article" date="1993" name="Gene">
        <title>Isolation and identification of six Pneumocystis carinii genes utilizing codon bias.</title>
        <authorList>
            <person name="Fletcher L.D."/>
            <person name="Berger L.C."/>
            <person name="Peel S.A."/>
            <person name="Baric R.S."/>
            <person name="Tidwell R.R."/>
            <person name="Dykstra C.C."/>
        </authorList>
    </citation>
    <scope>NUCLEOTIDE SEQUENCE OF 96-208</scope>
</reference>
<gene>
    <name type="primary">TUB-B</name>
</gene>
<proteinExistence type="evidence at transcript level"/>
<evidence type="ECO:0000250" key="1">
    <source>
        <dbReference type="UniProtKB" id="P68363"/>
    </source>
</evidence>
<evidence type="ECO:0000250" key="2">
    <source>
        <dbReference type="UniProtKB" id="Q13509"/>
    </source>
</evidence>
<evidence type="ECO:0000305" key="3"/>
<accession>P24637</accession>